<reference key="1">
    <citation type="submission" date="2008-01" db="EMBL/GenBank/DDBJ databases">
        <title>Complete sequence of Pseudomonas putida GB-1.</title>
        <authorList>
            <consortium name="US DOE Joint Genome Institute"/>
            <person name="Copeland A."/>
            <person name="Lucas S."/>
            <person name="Lapidus A."/>
            <person name="Barry K."/>
            <person name="Glavina del Rio T."/>
            <person name="Dalin E."/>
            <person name="Tice H."/>
            <person name="Pitluck S."/>
            <person name="Bruce D."/>
            <person name="Goodwin L."/>
            <person name="Chertkov O."/>
            <person name="Brettin T."/>
            <person name="Detter J.C."/>
            <person name="Han C."/>
            <person name="Kuske C.R."/>
            <person name="Schmutz J."/>
            <person name="Larimer F."/>
            <person name="Land M."/>
            <person name="Hauser L."/>
            <person name="Kyrpides N."/>
            <person name="Kim E."/>
            <person name="McCarthy J.K."/>
            <person name="Richardson P."/>
        </authorList>
    </citation>
    <scope>NUCLEOTIDE SEQUENCE [LARGE SCALE GENOMIC DNA]</scope>
    <source>
        <strain>GB-1</strain>
    </source>
</reference>
<comment type="function">
    <text evidence="1">Subunit of malonate decarboxylase, it is an acyl carrier protein to which acetyl and malonyl thioester residues are bound via a 2'-(5''-phosphoribosyl)-3'-dephospho-CoA prosthetic group and turn over during the catalytic mechanism.</text>
</comment>
<comment type="subcellular location">
    <subcellularLocation>
        <location evidence="1">Cytoplasm</location>
    </subcellularLocation>
</comment>
<comment type="PTM">
    <text evidence="1">Covalently binds the prosthetic group of malonate decarboxylase.</text>
</comment>
<comment type="similarity">
    <text evidence="1">Belongs to the MdcC family.</text>
</comment>
<organism>
    <name type="scientific">Pseudomonas putida (strain GB-1)</name>
    <dbReference type="NCBI Taxonomy" id="76869"/>
    <lineage>
        <taxon>Bacteria</taxon>
        <taxon>Pseudomonadati</taxon>
        <taxon>Pseudomonadota</taxon>
        <taxon>Gammaproteobacteria</taxon>
        <taxon>Pseudomonadales</taxon>
        <taxon>Pseudomonadaceae</taxon>
        <taxon>Pseudomonas</taxon>
    </lineage>
</organism>
<accession>B0KQS4</accession>
<protein>
    <recommendedName>
        <fullName evidence="1">Malonate decarboxylase acyl carrier protein</fullName>
    </recommendedName>
    <alternativeName>
        <fullName evidence="1">Malonate decarboxylase subunit delta</fullName>
    </alternativeName>
</protein>
<keyword id="KW-0963">Cytoplasm</keyword>
<keyword id="KW-0597">Phosphoprotein</keyword>
<evidence type="ECO:0000255" key="1">
    <source>
        <dbReference type="HAMAP-Rule" id="MF_00710"/>
    </source>
</evidence>
<gene>
    <name evidence="1" type="primary">mdcC</name>
    <name type="ordered locus">PputGB1_2440</name>
</gene>
<dbReference type="EMBL" id="CP000926">
    <property type="protein sequence ID" value="ABY98339.1"/>
    <property type="molecule type" value="Genomic_DNA"/>
</dbReference>
<dbReference type="RefSeq" id="WP_012272082.1">
    <property type="nucleotide sequence ID" value="NC_010322.1"/>
</dbReference>
<dbReference type="SMR" id="B0KQS4"/>
<dbReference type="KEGG" id="ppg:PputGB1_2440"/>
<dbReference type="eggNOG" id="COG3052">
    <property type="taxonomic scope" value="Bacteria"/>
</dbReference>
<dbReference type="HOGENOM" id="CLU_173135_1_0_6"/>
<dbReference type="Proteomes" id="UP000002157">
    <property type="component" value="Chromosome"/>
</dbReference>
<dbReference type="GO" id="GO:0005737">
    <property type="term" value="C:cytoplasm"/>
    <property type="evidence" value="ECO:0007669"/>
    <property type="project" value="UniProtKB-SubCell"/>
</dbReference>
<dbReference type="GO" id="GO:0000036">
    <property type="term" value="F:acyl carrier activity"/>
    <property type="evidence" value="ECO:0007669"/>
    <property type="project" value="UniProtKB-UniRule"/>
</dbReference>
<dbReference type="HAMAP" id="MF_00710">
    <property type="entry name" value="Malonate_deCO2ase_dsu"/>
    <property type="match status" value="1"/>
</dbReference>
<dbReference type="InterPro" id="IPR023439">
    <property type="entry name" value="Mal_deCO2ase/Cit_lyase_ACP"/>
</dbReference>
<dbReference type="InterPro" id="IPR009662">
    <property type="entry name" value="Malonate_deCO2ase_dsu"/>
</dbReference>
<dbReference type="NCBIfam" id="TIGR03130">
    <property type="entry name" value="malonate_delta"/>
    <property type="match status" value="1"/>
</dbReference>
<dbReference type="NCBIfam" id="NF002293">
    <property type="entry name" value="PRK01220.1"/>
    <property type="match status" value="1"/>
</dbReference>
<dbReference type="Pfam" id="PF06857">
    <property type="entry name" value="ACP"/>
    <property type="match status" value="1"/>
</dbReference>
<proteinExistence type="inferred from homology"/>
<feature type="chain" id="PRO_1000083202" description="Malonate decarboxylase acyl carrier protein">
    <location>
        <begin position="1"/>
        <end position="99"/>
    </location>
</feature>
<feature type="modified residue" description="O-(phosphoribosyl dephospho-coenzyme A)serine" evidence="1">
    <location>
        <position position="25"/>
    </location>
</feature>
<name>MDCC_PSEPG</name>
<sequence>METLTFNFPAAEPGRGRTLVGCVSSGDLEVLIEPGTAGSLQIQVVTSVNGSAARWAQLFQRLFEGRAWPAVNIDIHDFGATPGVVRLRLEQGFEEIAHD</sequence>